<dbReference type="EC" id="3.2.2.23" evidence="2"/>
<dbReference type="EC" id="4.2.99.18" evidence="2"/>
<dbReference type="EMBL" id="CU928158">
    <property type="protein sequence ID" value="CAQ91360.1"/>
    <property type="molecule type" value="Genomic_DNA"/>
</dbReference>
<dbReference type="RefSeq" id="WP_001114533.1">
    <property type="nucleotide sequence ID" value="NC_011740.1"/>
</dbReference>
<dbReference type="SMR" id="B7LVJ6"/>
<dbReference type="GeneID" id="93778348"/>
<dbReference type="KEGG" id="efe:EFER_3926"/>
<dbReference type="HOGENOM" id="CLU_038423_1_1_6"/>
<dbReference type="OrthoDB" id="9800855at2"/>
<dbReference type="Proteomes" id="UP000000745">
    <property type="component" value="Chromosome"/>
</dbReference>
<dbReference type="GO" id="GO:0034039">
    <property type="term" value="F:8-oxo-7,8-dihydroguanine DNA N-glycosylase activity"/>
    <property type="evidence" value="ECO:0007669"/>
    <property type="project" value="TreeGrafter"/>
</dbReference>
<dbReference type="GO" id="GO:0140078">
    <property type="term" value="F:class I DNA-(apurinic or apyrimidinic site) endonuclease activity"/>
    <property type="evidence" value="ECO:0007669"/>
    <property type="project" value="UniProtKB-EC"/>
</dbReference>
<dbReference type="GO" id="GO:0003684">
    <property type="term" value="F:damaged DNA binding"/>
    <property type="evidence" value="ECO:0007669"/>
    <property type="project" value="InterPro"/>
</dbReference>
<dbReference type="GO" id="GO:0008270">
    <property type="term" value="F:zinc ion binding"/>
    <property type="evidence" value="ECO:0007669"/>
    <property type="project" value="UniProtKB-UniRule"/>
</dbReference>
<dbReference type="GO" id="GO:0006284">
    <property type="term" value="P:base-excision repair"/>
    <property type="evidence" value="ECO:0007669"/>
    <property type="project" value="InterPro"/>
</dbReference>
<dbReference type="CDD" id="cd08966">
    <property type="entry name" value="EcFpg-like_N"/>
    <property type="match status" value="1"/>
</dbReference>
<dbReference type="FunFam" id="1.10.8.50:FF:000003">
    <property type="entry name" value="Formamidopyrimidine-DNA glycosylase"/>
    <property type="match status" value="1"/>
</dbReference>
<dbReference type="FunFam" id="3.20.190.10:FF:000001">
    <property type="entry name" value="Formamidopyrimidine-DNA glycosylase"/>
    <property type="match status" value="1"/>
</dbReference>
<dbReference type="Gene3D" id="1.10.8.50">
    <property type="match status" value="1"/>
</dbReference>
<dbReference type="Gene3D" id="3.20.190.10">
    <property type="entry name" value="MutM-like, N-terminal"/>
    <property type="match status" value="1"/>
</dbReference>
<dbReference type="HAMAP" id="MF_00103">
    <property type="entry name" value="Fapy_DNA_glycosyl"/>
    <property type="match status" value="1"/>
</dbReference>
<dbReference type="InterPro" id="IPR015886">
    <property type="entry name" value="DNA_glyclase/AP_lyase_DNA-bd"/>
</dbReference>
<dbReference type="InterPro" id="IPR015887">
    <property type="entry name" value="DNA_glyclase_Znf_dom_DNA_BS"/>
</dbReference>
<dbReference type="InterPro" id="IPR020629">
    <property type="entry name" value="Formamido-pyr_DNA_Glyclase"/>
</dbReference>
<dbReference type="InterPro" id="IPR012319">
    <property type="entry name" value="FPG_cat"/>
</dbReference>
<dbReference type="InterPro" id="IPR035937">
    <property type="entry name" value="MutM-like_N-ter"/>
</dbReference>
<dbReference type="InterPro" id="IPR010979">
    <property type="entry name" value="Ribosomal_uS13-like_H2TH"/>
</dbReference>
<dbReference type="InterPro" id="IPR000214">
    <property type="entry name" value="Znf_DNA_glyclase/AP_lyase"/>
</dbReference>
<dbReference type="InterPro" id="IPR010663">
    <property type="entry name" value="Znf_FPG/IleRS"/>
</dbReference>
<dbReference type="NCBIfam" id="TIGR00577">
    <property type="entry name" value="fpg"/>
    <property type="match status" value="1"/>
</dbReference>
<dbReference type="NCBIfam" id="NF002211">
    <property type="entry name" value="PRK01103.1"/>
    <property type="match status" value="1"/>
</dbReference>
<dbReference type="PANTHER" id="PTHR22993">
    <property type="entry name" value="FORMAMIDOPYRIMIDINE-DNA GLYCOSYLASE"/>
    <property type="match status" value="1"/>
</dbReference>
<dbReference type="PANTHER" id="PTHR22993:SF9">
    <property type="entry name" value="FORMAMIDOPYRIMIDINE-DNA GLYCOSYLASE"/>
    <property type="match status" value="1"/>
</dbReference>
<dbReference type="Pfam" id="PF01149">
    <property type="entry name" value="Fapy_DNA_glyco"/>
    <property type="match status" value="1"/>
</dbReference>
<dbReference type="Pfam" id="PF06831">
    <property type="entry name" value="H2TH"/>
    <property type="match status" value="1"/>
</dbReference>
<dbReference type="Pfam" id="PF06827">
    <property type="entry name" value="zf-FPG_IleRS"/>
    <property type="match status" value="1"/>
</dbReference>
<dbReference type="SMART" id="SM00898">
    <property type="entry name" value="Fapy_DNA_glyco"/>
    <property type="match status" value="1"/>
</dbReference>
<dbReference type="SMART" id="SM01232">
    <property type="entry name" value="H2TH"/>
    <property type="match status" value="1"/>
</dbReference>
<dbReference type="SUPFAM" id="SSF57716">
    <property type="entry name" value="Glucocorticoid receptor-like (DNA-binding domain)"/>
    <property type="match status" value="1"/>
</dbReference>
<dbReference type="SUPFAM" id="SSF81624">
    <property type="entry name" value="N-terminal domain of MutM-like DNA repair proteins"/>
    <property type="match status" value="1"/>
</dbReference>
<dbReference type="SUPFAM" id="SSF46946">
    <property type="entry name" value="S13-like H2TH domain"/>
    <property type="match status" value="1"/>
</dbReference>
<dbReference type="PROSITE" id="PS51068">
    <property type="entry name" value="FPG_CAT"/>
    <property type="match status" value="1"/>
</dbReference>
<dbReference type="PROSITE" id="PS01242">
    <property type="entry name" value="ZF_FPG_1"/>
    <property type="match status" value="1"/>
</dbReference>
<dbReference type="PROSITE" id="PS51066">
    <property type="entry name" value="ZF_FPG_2"/>
    <property type="match status" value="1"/>
</dbReference>
<protein>
    <recommendedName>
        <fullName evidence="2">Formamidopyrimidine-DNA glycosylase</fullName>
        <shortName evidence="2">Fapy-DNA glycosylase</shortName>
        <ecNumber evidence="2">3.2.2.23</ecNumber>
    </recommendedName>
    <alternativeName>
        <fullName evidence="2">DNA-(apurinic or apyrimidinic site) lyase MutM</fullName>
        <shortName evidence="2">AP lyase MutM</shortName>
        <ecNumber evidence="2">4.2.99.18</ecNumber>
    </alternativeName>
</protein>
<proteinExistence type="inferred from homology"/>
<organism>
    <name type="scientific">Escherichia fergusonii (strain ATCC 35469 / DSM 13698 / CCUG 18766 / IAM 14443 / JCM 21226 / LMG 7866 / NBRC 102419 / NCTC 12128 / CDC 0568-73)</name>
    <dbReference type="NCBI Taxonomy" id="585054"/>
    <lineage>
        <taxon>Bacteria</taxon>
        <taxon>Pseudomonadati</taxon>
        <taxon>Pseudomonadota</taxon>
        <taxon>Gammaproteobacteria</taxon>
        <taxon>Enterobacterales</taxon>
        <taxon>Enterobacteriaceae</taxon>
        <taxon>Escherichia</taxon>
    </lineage>
</organism>
<gene>
    <name evidence="2" type="primary">mutM</name>
    <name evidence="2" type="synonym">fpg</name>
    <name type="ordered locus">EFER_3926</name>
</gene>
<evidence type="ECO:0000250" key="1"/>
<evidence type="ECO:0000255" key="2">
    <source>
        <dbReference type="HAMAP-Rule" id="MF_00103"/>
    </source>
</evidence>
<feature type="initiator methionine" description="Removed" evidence="1">
    <location>
        <position position="1"/>
    </location>
</feature>
<feature type="chain" id="PRO_1000117385" description="Formamidopyrimidine-DNA glycosylase">
    <location>
        <begin position="2"/>
        <end position="269"/>
    </location>
</feature>
<feature type="zinc finger region" description="FPG-type" evidence="2">
    <location>
        <begin position="235"/>
        <end position="269"/>
    </location>
</feature>
<feature type="active site" description="Schiff-base intermediate with DNA" evidence="2">
    <location>
        <position position="2"/>
    </location>
</feature>
<feature type="active site" description="Proton donor" evidence="2">
    <location>
        <position position="3"/>
    </location>
</feature>
<feature type="active site" description="Proton donor; for beta-elimination activity" evidence="2">
    <location>
        <position position="57"/>
    </location>
</feature>
<feature type="active site" description="Proton donor; for delta-elimination activity" evidence="2">
    <location>
        <position position="259"/>
    </location>
</feature>
<feature type="binding site" evidence="2">
    <location>
        <position position="90"/>
    </location>
    <ligand>
        <name>DNA</name>
        <dbReference type="ChEBI" id="CHEBI:16991"/>
    </ligand>
</feature>
<feature type="binding site" evidence="2">
    <location>
        <position position="109"/>
    </location>
    <ligand>
        <name>DNA</name>
        <dbReference type="ChEBI" id="CHEBI:16991"/>
    </ligand>
</feature>
<feature type="binding site" evidence="2">
    <location>
        <position position="150"/>
    </location>
    <ligand>
        <name>DNA</name>
        <dbReference type="ChEBI" id="CHEBI:16991"/>
    </ligand>
</feature>
<name>FPG_ESCF3</name>
<keyword id="KW-0227">DNA damage</keyword>
<keyword id="KW-0234">DNA repair</keyword>
<keyword id="KW-0238">DNA-binding</keyword>
<keyword id="KW-0326">Glycosidase</keyword>
<keyword id="KW-0378">Hydrolase</keyword>
<keyword id="KW-0456">Lyase</keyword>
<keyword id="KW-0479">Metal-binding</keyword>
<keyword id="KW-0511">Multifunctional enzyme</keyword>
<keyword id="KW-0862">Zinc</keyword>
<keyword id="KW-0863">Zinc-finger</keyword>
<accession>B7LVJ6</accession>
<sequence>MPELPEVETSRRGIEPHLVGATILHAVVRNGRLRWPVSEEIYRLSDQPVLSVQRRAKYLLLELPEGWIIIHLGMSGSLRILPEELPPEKHDHVDLVMSNGKVLRYTDPRRFGAWLWTKELEGHNVLAHLGPEPLSDDFNGEYLHQKCAKKKTAIKPWLMDNKLVVGVGNIYASESLFAAGIHPDRLASSLSLAECELLARVIKAVLLRSIEQGGTTLKDFLQSDGKPGYFAQELQVYGRKGEPCRVCGTPIVATKHAQRATFYCRQCQK</sequence>
<comment type="function">
    <text evidence="2">Involved in base excision repair of DNA damaged by oxidation or by mutagenic agents. Acts as a DNA glycosylase that recognizes and removes damaged bases. Has a preference for oxidized purines, such as 7,8-dihydro-8-oxoguanine (8-oxoG). Has AP (apurinic/apyrimidinic) lyase activity and introduces nicks in the DNA strand. Cleaves the DNA backbone by beta-delta elimination to generate a single-strand break at the site of the removed base with both 3'- and 5'-phosphates.</text>
</comment>
<comment type="catalytic activity">
    <reaction evidence="2">
        <text>Hydrolysis of DNA containing ring-opened 7-methylguanine residues, releasing 2,6-diamino-4-hydroxy-5-(N-methyl)formamidopyrimidine.</text>
        <dbReference type="EC" id="3.2.2.23"/>
    </reaction>
</comment>
<comment type="catalytic activity">
    <reaction evidence="2">
        <text>2'-deoxyribonucleotide-(2'-deoxyribose 5'-phosphate)-2'-deoxyribonucleotide-DNA = a 3'-end 2'-deoxyribonucleotide-(2,3-dehydro-2,3-deoxyribose 5'-phosphate)-DNA + a 5'-end 5'-phospho-2'-deoxyribonucleoside-DNA + H(+)</text>
        <dbReference type="Rhea" id="RHEA:66592"/>
        <dbReference type="Rhea" id="RHEA-COMP:13180"/>
        <dbReference type="Rhea" id="RHEA-COMP:16897"/>
        <dbReference type="Rhea" id="RHEA-COMP:17067"/>
        <dbReference type="ChEBI" id="CHEBI:15378"/>
        <dbReference type="ChEBI" id="CHEBI:136412"/>
        <dbReference type="ChEBI" id="CHEBI:157695"/>
        <dbReference type="ChEBI" id="CHEBI:167181"/>
        <dbReference type="EC" id="4.2.99.18"/>
    </reaction>
</comment>
<comment type="cofactor">
    <cofactor evidence="2">
        <name>Zn(2+)</name>
        <dbReference type="ChEBI" id="CHEBI:29105"/>
    </cofactor>
    <text evidence="2">Binds 1 zinc ion per subunit.</text>
</comment>
<comment type="subunit">
    <text evidence="2">Monomer.</text>
</comment>
<comment type="similarity">
    <text evidence="2">Belongs to the FPG family.</text>
</comment>
<reference key="1">
    <citation type="journal article" date="2009" name="PLoS Genet.">
        <title>Organised genome dynamics in the Escherichia coli species results in highly diverse adaptive paths.</title>
        <authorList>
            <person name="Touchon M."/>
            <person name="Hoede C."/>
            <person name="Tenaillon O."/>
            <person name="Barbe V."/>
            <person name="Baeriswyl S."/>
            <person name="Bidet P."/>
            <person name="Bingen E."/>
            <person name="Bonacorsi S."/>
            <person name="Bouchier C."/>
            <person name="Bouvet O."/>
            <person name="Calteau A."/>
            <person name="Chiapello H."/>
            <person name="Clermont O."/>
            <person name="Cruveiller S."/>
            <person name="Danchin A."/>
            <person name="Diard M."/>
            <person name="Dossat C."/>
            <person name="Karoui M.E."/>
            <person name="Frapy E."/>
            <person name="Garry L."/>
            <person name="Ghigo J.M."/>
            <person name="Gilles A.M."/>
            <person name="Johnson J."/>
            <person name="Le Bouguenec C."/>
            <person name="Lescat M."/>
            <person name="Mangenot S."/>
            <person name="Martinez-Jehanne V."/>
            <person name="Matic I."/>
            <person name="Nassif X."/>
            <person name="Oztas S."/>
            <person name="Petit M.A."/>
            <person name="Pichon C."/>
            <person name="Rouy Z."/>
            <person name="Ruf C.S."/>
            <person name="Schneider D."/>
            <person name="Tourret J."/>
            <person name="Vacherie B."/>
            <person name="Vallenet D."/>
            <person name="Medigue C."/>
            <person name="Rocha E.P.C."/>
            <person name="Denamur E."/>
        </authorList>
    </citation>
    <scope>NUCLEOTIDE SEQUENCE [LARGE SCALE GENOMIC DNA]</scope>
    <source>
        <strain>ATCC 35469 / DSM 13698 / BCRC 15582 / CCUG 18766 / IAM 14443 / JCM 21226 / LMG 7866 / NBRC 102419 / NCTC 12128 / CDC 0568-73</strain>
    </source>
</reference>